<name>GLYA_BACAN</name>
<gene>
    <name evidence="1" type="primary">glyA</name>
    <name type="ordered locus">BA_5558</name>
    <name type="ordered locus">GBAA_5558</name>
    <name type="ordered locus">BAS5165</name>
</gene>
<keyword id="KW-0028">Amino-acid biosynthesis</keyword>
<keyword id="KW-0963">Cytoplasm</keyword>
<keyword id="KW-0554">One-carbon metabolism</keyword>
<keyword id="KW-0663">Pyridoxal phosphate</keyword>
<keyword id="KW-1185">Reference proteome</keyword>
<keyword id="KW-0808">Transferase</keyword>
<feature type="chain" id="PRO_0000113524" description="Serine hydroxymethyltransferase">
    <location>
        <begin position="1"/>
        <end position="413"/>
    </location>
</feature>
<feature type="binding site" evidence="1">
    <location>
        <position position="117"/>
    </location>
    <ligand>
        <name>(6S)-5,6,7,8-tetrahydrofolate</name>
        <dbReference type="ChEBI" id="CHEBI:57453"/>
    </ligand>
</feature>
<feature type="binding site" evidence="1">
    <location>
        <begin position="121"/>
        <end position="123"/>
    </location>
    <ligand>
        <name>(6S)-5,6,7,8-tetrahydrofolate</name>
        <dbReference type="ChEBI" id="CHEBI:57453"/>
    </ligand>
</feature>
<feature type="binding site" evidence="1">
    <location>
        <position position="239"/>
    </location>
    <ligand>
        <name>(6S)-5,6,7,8-tetrahydrofolate</name>
        <dbReference type="ChEBI" id="CHEBI:57453"/>
    </ligand>
</feature>
<feature type="binding site" evidence="1">
    <location>
        <begin position="349"/>
        <end position="351"/>
    </location>
    <ligand>
        <name>(6S)-5,6,7,8-tetrahydrofolate</name>
        <dbReference type="ChEBI" id="CHEBI:57453"/>
    </ligand>
</feature>
<feature type="site" description="Plays an important role in substrate specificity" evidence="1">
    <location>
        <position position="225"/>
    </location>
</feature>
<feature type="modified residue" description="N6-(pyridoxal phosphate)lysine" evidence="1">
    <location>
        <position position="226"/>
    </location>
</feature>
<sequence>MDHLKRQDEKVFAAIEAELGRQRSKIELIASENFVSEAVMEAQGSVLTNKYAEGYPGKRYYGGCEHVDVVEDIARDRVKEIFGAEHVNVQPHSGAQANMAVYFTILEQGDTVLGMNLSHGGHLTHGSPVNFSGVQYNFVEYGVDAESHCINYDDVLAKAKEHKPKLIVAGASAYPRVIDFKRFREIADEVGAYLMVDMAHIAGLVAAGLHPNPVPHAHFVTTTTHKTLRGPRGGMILCEEQFAKQIDKSIFPGIQGGPLMHVIAAKAVAFGEALQDDFKTYAQNIINNANRLAEGLQKEGLTLVSGGTDNHLILIDVRNLEITGKVAEHVLDEVGITVNKNTIPFETASPFVTSGVRIGTAAVTSRGFGLEDMDEIASLIAYTLKNHENEAALEEARKRVEALTSKFPMYTDL</sequence>
<protein>
    <recommendedName>
        <fullName evidence="1">Serine hydroxymethyltransferase</fullName>
        <shortName evidence="1">SHMT</shortName>
        <shortName evidence="1">Serine methylase</shortName>
        <ecNumber evidence="1">2.1.2.1</ecNumber>
    </recommendedName>
</protein>
<organism>
    <name type="scientific">Bacillus anthracis</name>
    <dbReference type="NCBI Taxonomy" id="1392"/>
    <lineage>
        <taxon>Bacteria</taxon>
        <taxon>Bacillati</taxon>
        <taxon>Bacillota</taxon>
        <taxon>Bacilli</taxon>
        <taxon>Bacillales</taxon>
        <taxon>Bacillaceae</taxon>
        <taxon>Bacillus</taxon>
        <taxon>Bacillus cereus group</taxon>
    </lineage>
</organism>
<proteinExistence type="inferred from homology"/>
<reference key="1">
    <citation type="journal article" date="2003" name="Nature">
        <title>The genome sequence of Bacillus anthracis Ames and comparison to closely related bacteria.</title>
        <authorList>
            <person name="Read T.D."/>
            <person name="Peterson S.N."/>
            <person name="Tourasse N.J."/>
            <person name="Baillie L.W."/>
            <person name="Paulsen I.T."/>
            <person name="Nelson K.E."/>
            <person name="Tettelin H."/>
            <person name="Fouts D.E."/>
            <person name="Eisen J.A."/>
            <person name="Gill S.R."/>
            <person name="Holtzapple E.K."/>
            <person name="Okstad O.A."/>
            <person name="Helgason E."/>
            <person name="Rilstone J."/>
            <person name="Wu M."/>
            <person name="Kolonay J.F."/>
            <person name="Beanan M.J."/>
            <person name="Dodson R.J."/>
            <person name="Brinkac L.M."/>
            <person name="Gwinn M.L."/>
            <person name="DeBoy R.T."/>
            <person name="Madpu R."/>
            <person name="Daugherty S.C."/>
            <person name="Durkin A.S."/>
            <person name="Haft D.H."/>
            <person name="Nelson W.C."/>
            <person name="Peterson J.D."/>
            <person name="Pop M."/>
            <person name="Khouri H.M."/>
            <person name="Radune D."/>
            <person name="Benton J.L."/>
            <person name="Mahamoud Y."/>
            <person name="Jiang L."/>
            <person name="Hance I.R."/>
            <person name="Weidman J.F."/>
            <person name="Berry K.J."/>
            <person name="Plaut R.D."/>
            <person name="Wolf A.M."/>
            <person name="Watkins K.L."/>
            <person name="Nierman W.C."/>
            <person name="Hazen A."/>
            <person name="Cline R.T."/>
            <person name="Redmond C."/>
            <person name="Thwaite J.E."/>
            <person name="White O."/>
            <person name="Salzberg S.L."/>
            <person name="Thomason B."/>
            <person name="Friedlander A.M."/>
            <person name="Koehler T.M."/>
            <person name="Hanna P.C."/>
            <person name="Kolstoe A.-B."/>
            <person name="Fraser C.M."/>
        </authorList>
    </citation>
    <scope>NUCLEOTIDE SEQUENCE [LARGE SCALE GENOMIC DNA]</scope>
    <source>
        <strain>Ames / isolate Porton</strain>
    </source>
</reference>
<reference key="2">
    <citation type="journal article" date="2009" name="J. Bacteriol.">
        <title>The complete genome sequence of Bacillus anthracis Ames 'Ancestor'.</title>
        <authorList>
            <person name="Ravel J."/>
            <person name="Jiang L."/>
            <person name="Stanley S.T."/>
            <person name="Wilson M.R."/>
            <person name="Decker R.S."/>
            <person name="Read T.D."/>
            <person name="Worsham P."/>
            <person name="Keim P.S."/>
            <person name="Salzberg S.L."/>
            <person name="Fraser-Liggett C.M."/>
            <person name="Rasko D.A."/>
        </authorList>
    </citation>
    <scope>NUCLEOTIDE SEQUENCE [LARGE SCALE GENOMIC DNA]</scope>
    <source>
        <strain>Ames ancestor</strain>
    </source>
</reference>
<reference key="3">
    <citation type="submission" date="2004-01" db="EMBL/GenBank/DDBJ databases">
        <title>Complete genome sequence of Bacillus anthracis Sterne.</title>
        <authorList>
            <person name="Brettin T.S."/>
            <person name="Bruce D."/>
            <person name="Challacombe J.F."/>
            <person name="Gilna P."/>
            <person name="Han C."/>
            <person name="Hill K."/>
            <person name="Hitchcock P."/>
            <person name="Jackson P."/>
            <person name="Keim P."/>
            <person name="Longmire J."/>
            <person name="Lucas S."/>
            <person name="Okinaka R."/>
            <person name="Richardson P."/>
            <person name="Rubin E."/>
            <person name="Tice H."/>
        </authorList>
    </citation>
    <scope>NUCLEOTIDE SEQUENCE [LARGE SCALE GENOMIC DNA]</scope>
    <source>
        <strain>Sterne</strain>
    </source>
</reference>
<accession>Q81JY4</accession>
<accession>Q6HQI4</accession>
<accession>Q6KJV8</accession>
<comment type="function">
    <text evidence="1">Catalyzes the reversible interconversion of serine and glycine with tetrahydrofolate (THF) serving as the one-carbon carrier. This reaction serves as the major source of one-carbon groups required for the biosynthesis of purines, thymidylate, methionine, and other important biomolecules. Also exhibits THF-independent aldolase activity toward beta-hydroxyamino acids, producing glycine and aldehydes, via a retro-aldol mechanism.</text>
</comment>
<comment type="catalytic activity">
    <reaction evidence="1">
        <text>(6R)-5,10-methylene-5,6,7,8-tetrahydrofolate + glycine + H2O = (6S)-5,6,7,8-tetrahydrofolate + L-serine</text>
        <dbReference type="Rhea" id="RHEA:15481"/>
        <dbReference type="ChEBI" id="CHEBI:15377"/>
        <dbReference type="ChEBI" id="CHEBI:15636"/>
        <dbReference type="ChEBI" id="CHEBI:33384"/>
        <dbReference type="ChEBI" id="CHEBI:57305"/>
        <dbReference type="ChEBI" id="CHEBI:57453"/>
        <dbReference type="EC" id="2.1.2.1"/>
    </reaction>
</comment>
<comment type="cofactor">
    <cofactor evidence="1">
        <name>pyridoxal 5'-phosphate</name>
        <dbReference type="ChEBI" id="CHEBI:597326"/>
    </cofactor>
</comment>
<comment type="pathway">
    <text evidence="1">One-carbon metabolism; tetrahydrofolate interconversion.</text>
</comment>
<comment type="pathway">
    <text evidence="1">Amino-acid biosynthesis; glycine biosynthesis; glycine from L-serine: step 1/1.</text>
</comment>
<comment type="subunit">
    <text evidence="1">Homodimer.</text>
</comment>
<comment type="subcellular location">
    <subcellularLocation>
        <location evidence="1">Cytoplasm</location>
    </subcellularLocation>
</comment>
<comment type="similarity">
    <text evidence="1">Belongs to the SHMT family.</text>
</comment>
<comment type="sequence caution" evidence="2">
    <conflict type="erroneous initiation">
        <sequence resource="EMBL-CDS" id="AAT57454"/>
    </conflict>
</comment>
<dbReference type="EC" id="2.1.2.1" evidence="1"/>
<dbReference type="EMBL" id="AE016879">
    <property type="protein sequence ID" value="AAP29202.1"/>
    <property type="molecule type" value="Genomic_DNA"/>
</dbReference>
<dbReference type="EMBL" id="AE017334">
    <property type="protein sequence ID" value="AAT34702.1"/>
    <property type="molecule type" value="Genomic_DNA"/>
</dbReference>
<dbReference type="EMBL" id="AE017225">
    <property type="protein sequence ID" value="AAT57454.1"/>
    <property type="status" value="ALT_INIT"/>
    <property type="molecule type" value="Genomic_DNA"/>
</dbReference>
<dbReference type="RefSeq" id="NP_847716.1">
    <property type="nucleotide sequence ID" value="NC_003997.3"/>
</dbReference>
<dbReference type="RefSeq" id="WP_000349814.1">
    <property type="nucleotide sequence ID" value="NZ_WXXJ01000038.1"/>
</dbReference>
<dbReference type="SMR" id="Q81JY4"/>
<dbReference type="STRING" id="261594.GBAA_5558"/>
<dbReference type="DNASU" id="1085246"/>
<dbReference type="GeneID" id="45025146"/>
<dbReference type="KEGG" id="ban:BA_5558"/>
<dbReference type="KEGG" id="bar:GBAA_5558"/>
<dbReference type="KEGG" id="bat:BAS5165"/>
<dbReference type="PATRIC" id="fig|198094.11.peg.5518"/>
<dbReference type="eggNOG" id="COG0112">
    <property type="taxonomic scope" value="Bacteria"/>
</dbReference>
<dbReference type="HOGENOM" id="CLU_022477_2_1_9"/>
<dbReference type="OMA" id="CQFANVQ"/>
<dbReference type="OrthoDB" id="9803846at2"/>
<dbReference type="UniPathway" id="UPA00193"/>
<dbReference type="UniPathway" id="UPA00288">
    <property type="reaction ID" value="UER01023"/>
</dbReference>
<dbReference type="Proteomes" id="UP000000427">
    <property type="component" value="Chromosome"/>
</dbReference>
<dbReference type="Proteomes" id="UP000000594">
    <property type="component" value="Chromosome"/>
</dbReference>
<dbReference type="GO" id="GO:0005829">
    <property type="term" value="C:cytosol"/>
    <property type="evidence" value="ECO:0007669"/>
    <property type="project" value="TreeGrafter"/>
</dbReference>
<dbReference type="GO" id="GO:0004372">
    <property type="term" value="F:glycine hydroxymethyltransferase activity"/>
    <property type="evidence" value="ECO:0007669"/>
    <property type="project" value="UniProtKB-UniRule"/>
</dbReference>
<dbReference type="GO" id="GO:0030170">
    <property type="term" value="F:pyridoxal phosphate binding"/>
    <property type="evidence" value="ECO:0007669"/>
    <property type="project" value="UniProtKB-UniRule"/>
</dbReference>
<dbReference type="GO" id="GO:0019264">
    <property type="term" value="P:glycine biosynthetic process from serine"/>
    <property type="evidence" value="ECO:0007669"/>
    <property type="project" value="UniProtKB-UniRule"/>
</dbReference>
<dbReference type="GO" id="GO:0035999">
    <property type="term" value="P:tetrahydrofolate interconversion"/>
    <property type="evidence" value="ECO:0007669"/>
    <property type="project" value="UniProtKB-UniRule"/>
</dbReference>
<dbReference type="CDD" id="cd00378">
    <property type="entry name" value="SHMT"/>
    <property type="match status" value="1"/>
</dbReference>
<dbReference type="FunFam" id="3.40.640.10:FF:000001">
    <property type="entry name" value="Serine hydroxymethyltransferase"/>
    <property type="match status" value="1"/>
</dbReference>
<dbReference type="FunFam" id="3.90.1150.10:FF:000003">
    <property type="entry name" value="Serine hydroxymethyltransferase"/>
    <property type="match status" value="1"/>
</dbReference>
<dbReference type="Gene3D" id="3.90.1150.10">
    <property type="entry name" value="Aspartate Aminotransferase, domain 1"/>
    <property type="match status" value="1"/>
</dbReference>
<dbReference type="Gene3D" id="3.40.640.10">
    <property type="entry name" value="Type I PLP-dependent aspartate aminotransferase-like (Major domain)"/>
    <property type="match status" value="1"/>
</dbReference>
<dbReference type="HAMAP" id="MF_00051">
    <property type="entry name" value="SHMT"/>
    <property type="match status" value="1"/>
</dbReference>
<dbReference type="InterPro" id="IPR015424">
    <property type="entry name" value="PyrdxlP-dep_Trfase"/>
</dbReference>
<dbReference type="InterPro" id="IPR015421">
    <property type="entry name" value="PyrdxlP-dep_Trfase_major"/>
</dbReference>
<dbReference type="InterPro" id="IPR015422">
    <property type="entry name" value="PyrdxlP-dep_Trfase_small"/>
</dbReference>
<dbReference type="InterPro" id="IPR001085">
    <property type="entry name" value="Ser_HO-MeTrfase"/>
</dbReference>
<dbReference type="InterPro" id="IPR049943">
    <property type="entry name" value="Ser_HO-MeTrfase-like"/>
</dbReference>
<dbReference type="InterPro" id="IPR019798">
    <property type="entry name" value="Ser_HO-MeTrfase_PLP_BS"/>
</dbReference>
<dbReference type="InterPro" id="IPR039429">
    <property type="entry name" value="SHMT-like_dom"/>
</dbReference>
<dbReference type="NCBIfam" id="NF000586">
    <property type="entry name" value="PRK00011.1"/>
    <property type="match status" value="1"/>
</dbReference>
<dbReference type="PANTHER" id="PTHR11680">
    <property type="entry name" value="SERINE HYDROXYMETHYLTRANSFERASE"/>
    <property type="match status" value="1"/>
</dbReference>
<dbReference type="PANTHER" id="PTHR11680:SF35">
    <property type="entry name" value="SERINE HYDROXYMETHYLTRANSFERASE 1"/>
    <property type="match status" value="1"/>
</dbReference>
<dbReference type="Pfam" id="PF00464">
    <property type="entry name" value="SHMT"/>
    <property type="match status" value="1"/>
</dbReference>
<dbReference type="PIRSF" id="PIRSF000412">
    <property type="entry name" value="SHMT"/>
    <property type="match status" value="1"/>
</dbReference>
<dbReference type="SUPFAM" id="SSF53383">
    <property type="entry name" value="PLP-dependent transferases"/>
    <property type="match status" value="1"/>
</dbReference>
<dbReference type="PROSITE" id="PS00096">
    <property type="entry name" value="SHMT"/>
    <property type="match status" value="1"/>
</dbReference>
<evidence type="ECO:0000255" key="1">
    <source>
        <dbReference type="HAMAP-Rule" id="MF_00051"/>
    </source>
</evidence>
<evidence type="ECO:0000305" key="2"/>